<dbReference type="EC" id="2.3.2.27"/>
<dbReference type="EMBL" id="AB013395">
    <property type="protein sequence ID" value="BAB11655.1"/>
    <property type="molecule type" value="Genomic_DNA"/>
</dbReference>
<dbReference type="EMBL" id="CP002688">
    <property type="protein sequence ID" value="AED98016.1"/>
    <property type="molecule type" value="Genomic_DNA"/>
</dbReference>
<dbReference type="EMBL" id="BT015352">
    <property type="protein sequence ID" value="AAU05475.1"/>
    <property type="molecule type" value="mRNA"/>
</dbReference>
<dbReference type="EMBL" id="BT015720">
    <property type="protein sequence ID" value="AAU45218.1"/>
    <property type="molecule type" value="mRNA"/>
</dbReference>
<dbReference type="RefSeq" id="NP_201323.1">
    <property type="nucleotide sequence ID" value="NM_125917.3"/>
</dbReference>
<dbReference type="SMR" id="Q9FJP6"/>
<dbReference type="BioGRID" id="21885">
    <property type="interactions" value="3"/>
</dbReference>
<dbReference type="FunCoup" id="Q9FJP6">
    <property type="interactions" value="620"/>
</dbReference>
<dbReference type="STRING" id="3702.Q9FJP6"/>
<dbReference type="iPTMnet" id="Q9FJP6"/>
<dbReference type="PaxDb" id="3702-AT5G65200.1"/>
<dbReference type="ProteomicsDB" id="224847"/>
<dbReference type="EnsemblPlants" id="AT5G65200.1">
    <property type="protein sequence ID" value="AT5G65200.1"/>
    <property type="gene ID" value="AT5G65200"/>
</dbReference>
<dbReference type="GeneID" id="836643"/>
<dbReference type="Gramene" id="AT5G65200.1">
    <property type="protein sequence ID" value="AT5G65200.1"/>
    <property type="gene ID" value="AT5G65200"/>
</dbReference>
<dbReference type="KEGG" id="ath:AT5G65200"/>
<dbReference type="Araport" id="AT5G65200"/>
<dbReference type="TAIR" id="AT5G65200">
    <property type="gene designation" value="PUB38"/>
</dbReference>
<dbReference type="eggNOG" id="ENOG502QPJU">
    <property type="taxonomic scope" value="Eukaryota"/>
</dbReference>
<dbReference type="HOGENOM" id="CLU_006348_7_0_1"/>
<dbReference type="InParanoid" id="Q9FJP6"/>
<dbReference type="OMA" id="RVDHFYS"/>
<dbReference type="PhylomeDB" id="Q9FJP6"/>
<dbReference type="UniPathway" id="UPA00143"/>
<dbReference type="PRO" id="PR:Q9FJP6"/>
<dbReference type="Proteomes" id="UP000006548">
    <property type="component" value="Chromosome 5"/>
</dbReference>
<dbReference type="ExpressionAtlas" id="Q9FJP6">
    <property type="expression patterns" value="baseline and differential"/>
</dbReference>
<dbReference type="GO" id="GO:0070696">
    <property type="term" value="F:transmembrane receptor protein serine/threonine kinase binding"/>
    <property type="evidence" value="ECO:0000353"/>
    <property type="project" value="UniProtKB"/>
</dbReference>
<dbReference type="GO" id="GO:0004842">
    <property type="term" value="F:ubiquitin-protein transferase activity"/>
    <property type="evidence" value="ECO:0000314"/>
    <property type="project" value="TAIR"/>
</dbReference>
<dbReference type="GO" id="GO:0016567">
    <property type="term" value="P:protein ubiquitination"/>
    <property type="evidence" value="ECO:0000314"/>
    <property type="project" value="TAIR"/>
</dbReference>
<dbReference type="FunFam" id="1.25.10.10:FF:000578">
    <property type="entry name" value="RING-type E3 ubiquitin transferase"/>
    <property type="match status" value="1"/>
</dbReference>
<dbReference type="FunFam" id="3.30.40.10:FF:000565">
    <property type="entry name" value="RING-type E3 ubiquitin transferase"/>
    <property type="match status" value="1"/>
</dbReference>
<dbReference type="Gene3D" id="1.25.10.10">
    <property type="entry name" value="Leucine-rich Repeat Variant"/>
    <property type="match status" value="1"/>
</dbReference>
<dbReference type="Gene3D" id="3.30.40.10">
    <property type="entry name" value="Zinc/RING finger domain, C3HC4 (zinc finger)"/>
    <property type="match status" value="1"/>
</dbReference>
<dbReference type="InterPro" id="IPR011989">
    <property type="entry name" value="ARM-like"/>
</dbReference>
<dbReference type="InterPro" id="IPR016024">
    <property type="entry name" value="ARM-type_fold"/>
</dbReference>
<dbReference type="InterPro" id="IPR000225">
    <property type="entry name" value="Armadillo"/>
</dbReference>
<dbReference type="InterPro" id="IPR003613">
    <property type="entry name" value="Ubox_domain"/>
</dbReference>
<dbReference type="InterPro" id="IPR013083">
    <property type="entry name" value="Znf_RING/FYVE/PHD"/>
</dbReference>
<dbReference type="PANTHER" id="PTHR23315">
    <property type="entry name" value="U BOX DOMAIN-CONTAINING"/>
    <property type="match status" value="1"/>
</dbReference>
<dbReference type="PANTHER" id="PTHR23315:SF276">
    <property type="entry name" value="U-BOX DOMAIN-CONTAINING PROTEIN 38"/>
    <property type="match status" value="1"/>
</dbReference>
<dbReference type="Pfam" id="PF00514">
    <property type="entry name" value="Arm"/>
    <property type="match status" value="1"/>
</dbReference>
<dbReference type="Pfam" id="PF04564">
    <property type="entry name" value="U-box"/>
    <property type="match status" value="1"/>
</dbReference>
<dbReference type="SMART" id="SM00185">
    <property type="entry name" value="ARM"/>
    <property type="match status" value="4"/>
</dbReference>
<dbReference type="SMART" id="SM00504">
    <property type="entry name" value="Ubox"/>
    <property type="match status" value="1"/>
</dbReference>
<dbReference type="SUPFAM" id="SSF48371">
    <property type="entry name" value="ARM repeat"/>
    <property type="match status" value="1"/>
</dbReference>
<dbReference type="SUPFAM" id="SSF57850">
    <property type="entry name" value="RING/U-box"/>
    <property type="match status" value="1"/>
</dbReference>
<dbReference type="PROSITE" id="PS51698">
    <property type="entry name" value="U_BOX"/>
    <property type="match status" value="1"/>
</dbReference>
<name>PUB38_ARATH</name>
<gene>
    <name type="primary">PUB38</name>
    <name type="ordered locus">At5g65200</name>
    <name type="ORF">MQN23.13</name>
</gene>
<sequence length="556" mass="61778">MGKNGRLRWNPFSHRSSSSTSSSSRQQQQEQQPPVEFLCPISKSVMSDPVVVSSGQTFERVCVQVCRDLNFIPKLNDDEESLPDFSNIIPNLNMKSTIDTWCDTVGVSRPQPPDYSTVERILRQQMPPPDVEIRVSEQELLRAVAHRAPMIIHHADSELMGRRDFNNSTTSSDESVIVAHSPFTPLPLTTRPACFSPSPSSSSSEIETLTHHTFFSNSTSTATEEDEVIYNKLKSSEIFDQEQGLIMMRKMTRTNDEARVSLCSPRILSLLKNMIVSRYSLVQTNALASLVNLSLDKKNKLTIVRLGFVPILIDVLKSGSREAQEHAAGTIFSLSLEDDNKMPIGVLGALQPLLHALRAAESDRTRHDSALALYHLTLNQTNRSKLVRLGAVPALFSMVRSGESASRALLVICNLACCSEGRSAMLDANAVAILVGKLREEWTEEPTEARSSSSARENCVAALFALSHESLRFKGLAKEARAVEVLKEVEERGTERAREKAKKILQLMRERVPEDDEEDGEGSIDWDRVIDSNGSIRSRFRVGGRNRVVTQNSSGF</sequence>
<keyword id="KW-1185">Reference proteome</keyword>
<keyword id="KW-0677">Repeat</keyword>
<keyword id="KW-0808">Transferase</keyword>
<keyword id="KW-0833">Ubl conjugation pathway</keyword>
<comment type="function">
    <text evidence="1">Functions as an E3 ubiquitin ligase.</text>
</comment>
<comment type="catalytic activity">
    <reaction>
        <text>S-ubiquitinyl-[E2 ubiquitin-conjugating enzyme]-L-cysteine + [acceptor protein]-L-lysine = [E2 ubiquitin-conjugating enzyme]-L-cysteine + N(6)-ubiquitinyl-[acceptor protein]-L-lysine.</text>
        <dbReference type="EC" id="2.3.2.27"/>
    </reaction>
</comment>
<comment type="pathway">
    <text>Protein modification; protein ubiquitination.</text>
</comment>
<comment type="subunit">
    <text>Binds to SD16, SD17, SD18 and SD129.</text>
</comment>
<accession>Q9FJP6</accession>
<organism>
    <name type="scientific">Arabidopsis thaliana</name>
    <name type="common">Mouse-ear cress</name>
    <dbReference type="NCBI Taxonomy" id="3702"/>
    <lineage>
        <taxon>Eukaryota</taxon>
        <taxon>Viridiplantae</taxon>
        <taxon>Streptophyta</taxon>
        <taxon>Embryophyta</taxon>
        <taxon>Tracheophyta</taxon>
        <taxon>Spermatophyta</taxon>
        <taxon>Magnoliopsida</taxon>
        <taxon>eudicotyledons</taxon>
        <taxon>Gunneridae</taxon>
        <taxon>Pentapetalae</taxon>
        <taxon>rosids</taxon>
        <taxon>malvids</taxon>
        <taxon>Brassicales</taxon>
        <taxon>Brassicaceae</taxon>
        <taxon>Camelineae</taxon>
        <taxon>Arabidopsis</taxon>
    </lineage>
</organism>
<proteinExistence type="evidence at protein level"/>
<evidence type="ECO:0000250" key="1"/>
<evidence type="ECO:0000256" key="2">
    <source>
        <dbReference type="SAM" id="MobiDB-lite"/>
    </source>
</evidence>
<evidence type="ECO:0000305" key="3"/>
<reference key="1">
    <citation type="journal article" date="1998" name="DNA Res.">
        <title>Structural analysis of Arabidopsis thaliana chromosome 5. VI. Sequence features of the regions of 1,367,185 bp covered by 19 physically assigned P1 and TAC clones.</title>
        <authorList>
            <person name="Kotani H."/>
            <person name="Nakamura Y."/>
            <person name="Sato S."/>
            <person name="Asamizu E."/>
            <person name="Kaneko T."/>
            <person name="Miyajima N."/>
            <person name="Tabata S."/>
        </authorList>
    </citation>
    <scope>NUCLEOTIDE SEQUENCE [LARGE SCALE GENOMIC DNA]</scope>
    <source>
        <strain>cv. Columbia</strain>
    </source>
</reference>
<reference key="2">
    <citation type="journal article" date="2017" name="Plant J.">
        <title>Araport11: a complete reannotation of the Arabidopsis thaliana reference genome.</title>
        <authorList>
            <person name="Cheng C.Y."/>
            <person name="Krishnakumar V."/>
            <person name="Chan A.P."/>
            <person name="Thibaud-Nissen F."/>
            <person name="Schobel S."/>
            <person name="Town C.D."/>
        </authorList>
    </citation>
    <scope>GENOME REANNOTATION</scope>
    <source>
        <strain>cv. Columbia</strain>
    </source>
</reference>
<reference key="3">
    <citation type="submission" date="2004-09" db="EMBL/GenBank/DDBJ databases">
        <title>Arabidopsis ORF clones.</title>
        <authorList>
            <person name="Cheuk R.F."/>
            <person name="Chen H."/>
            <person name="Kim C.J."/>
            <person name="Shinn P."/>
            <person name="Ecker J.R."/>
        </authorList>
    </citation>
    <scope>NUCLEOTIDE SEQUENCE [LARGE SCALE MRNA]</scope>
    <source>
        <strain>cv. Columbia</strain>
    </source>
</reference>
<reference key="4">
    <citation type="journal article" date="2004" name="Plant Physiol.">
        <title>A large complement of the predicted Arabidopsis ARM repeat proteins are members of the U-box E3 ubiquitin ligase family.</title>
        <authorList>
            <person name="Mudgil Y."/>
            <person name="Shiu S.-H."/>
            <person name="Stone S.L."/>
            <person name="Salt J.N."/>
            <person name="Goring D.R."/>
        </authorList>
    </citation>
    <scope>GENE FAMILY ORGANIZATION</scope>
</reference>
<reference key="5">
    <citation type="journal article" date="2008" name="Plant Physiol.">
        <title>Interactions between the S-domain receptor kinases and AtPUB-ARM E3 ubiquitin ligases suggest a conserved signaling pathway in Arabidopsis.</title>
        <authorList>
            <person name="Samuel M.A."/>
            <person name="Mudgil Y."/>
            <person name="Salt J.N."/>
            <person name="Delmas F."/>
            <person name="Ramachandran S."/>
            <person name="Chilelli A."/>
            <person name="Goring D.R."/>
        </authorList>
    </citation>
    <scope>INTERACTION WITH SD16; SD17; SD18 AND SD129</scope>
</reference>
<protein>
    <recommendedName>
        <fullName>U-box domain-containing protein 38</fullName>
        <ecNumber>2.3.2.27</ecNumber>
    </recommendedName>
    <alternativeName>
        <fullName>Plant U-box protein 38</fullName>
    </alternativeName>
    <alternativeName>
        <fullName evidence="3">RING-type E3 ubiquitin transferase PUB38</fullName>
    </alternativeName>
</protein>
<feature type="chain" id="PRO_0000322178" description="U-box domain-containing protein 38">
    <location>
        <begin position="1"/>
        <end position="556"/>
    </location>
</feature>
<feature type="domain" description="U-box">
    <location>
        <begin position="32"/>
        <end position="108"/>
    </location>
</feature>
<feature type="repeat" description="ARM 1">
    <location>
        <begin position="256"/>
        <end position="295"/>
    </location>
</feature>
<feature type="repeat" description="ARM 2">
    <location>
        <begin position="297"/>
        <end position="336"/>
    </location>
</feature>
<feature type="repeat" description="ARM 3">
    <location>
        <begin position="338"/>
        <end position="378"/>
    </location>
</feature>
<feature type="repeat" description="ARM 4">
    <location>
        <begin position="380"/>
        <end position="417"/>
    </location>
</feature>
<feature type="repeat" description="ARM 5">
    <location>
        <begin position="418"/>
        <end position="468"/>
    </location>
</feature>
<feature type="region of interest" description="Disordered" evidence="2">
    <location>
        <begin position="1"/>
        <end position="34"/>
    </location>
</feature>
<feature type="compositionally biased region" description="Low complexity" evidence="2">
    <location>
        <begin position="13"/>
        <end position="32"/>
    </location>
</feature>